<feature type="signal peptide" evidence="3">
    <location>
        <begin position="1"/>
        <end position="24"/>
    </location>
</feature>
<feature type="propeptide" id="PRO_0000452034" evidence="1">
    <location>
        <begin position="25"/>
        <end position="29"/>
    </location>
</feature>
<feature type="peptide" id="PRO_5019458389" description="Con-Ins K2 B chain">
    <location>
        <begin position="30"/>
        <end position="56"/>
    </location>
</feature>
<feature type="propeptide" id="PRO_0000452035" description="C peptide" evidence="1">
    <location>
        <begin position="57"/>
        <end position="83"/>
    </location>
</feature>
<feature type="peptide" id="PRO_0000452036" description="Con-Ins K2 A chain" evidence="1">
    <location>
        <begin position="84"/>
        <end position="109"/>
    </location>
</feature>
<feature type="modified residue" description="4-carboxyglutamate" evidence="1">
    <location>
        <position position="44"/>
    </location>
</feature>
<feature type="disulfide bond" description="Interchain (between B and A chains)" evidence="1">
    <location>
        <begin position="41"/>
        <end position="90"/>
    </location>
</feature>
<feature type="disulfide bond" description="Interchain (between B and A chains)" evidence="1">
    <location>
        <begin position="53"/>
        <end position="103"/>
    </location>
</feature>
<feature type="disulfide bond" evidence="1">
    <location>
        <begin position="89"/>
        <end position="94"/>
    </location>
</feature>
<evidence type="ECO:0000250" key="1">
    <source>
        <dbReference type="UniProtKB" id="A0A0B5AC95"/>
    </source>
</evidence>
<evidence type="ECO:0000250" key="2">
    <source>
        <dbReference type="UniProtKB" id="A0A3S9V8L7"/>
    </source>
</evidence>
<evidence type="ECO:0000255" key="3"/>
<evidence type="ECO:0000269" key="4">
    <source>
    </source>
</evidence>
<evidence type="ECO:0000303" key="5">
    <source>
    </source>
</evidence>
<evidence type="ECO:0000305" key="6"/>
<comment type="function">
    <text evidence="1 2 4">This venom insulin, from a fish-hunting cone snail, facilitates prey capture by rapidly inducing hypoglycemic shock (PubMed:30747102). It is one of the smallest known insulin found in nature and lacks the C-terminal segment of the B chain that, in human insulin, mediates engagement of the insulin receptor (INSR) and assembly of the hormone's hexameric storage form (By similarity). Despite lacking this segment, it both binds and activates human insulin receptor (long isoform (HIR-B)) with a moderate potency (EC(50)=373.2 nM) (PubMed:30747102). In vivo, intraperitoneal injection of this peptide into zebrafish lowers blood glucose with a lower potency than human insulin (PubMed:30747102). In addition, when applied to water, this peptide reduces overall locomotor activity of zebrafish larvae, observed as a significant decrease in the percentage of time spent swimming and movement frequency (By similarity). When tested on a mouse model of diabetes, this insulin also lowers blood glucose with a 20-fold lower potency than human insulin (By similarity).</text>
</comment>
<comment type="subunit">
    <text evidence="1">Heterodimer of A and B chains; disulfide-linked.</text>
</comment>
<comment type="subcellular location">
    <subcellularLocation>
        <location evidence="1">Secreted</location>
    </subcellularLocation>
</comment>
<comment type="tissue specificity">
    <text evidence="1">Expressed by the venom gland.</text>
</comment>
<comment type="similarity">
    <text evidence="6">Belongs to the insulin family.</text>
</comment>
<accession>A0A3S9V8K6</accession>
<sequence>MTTSSYFLLVALGLLLYVCQSSFGNPHTRDSGTTPDRDHSCGGELVDRLVKLCPSNRKRRGFPSMLKARAKRNEAFLLQRDGRVIVGDCCDNYCTDERLKGYCASLLGL</sequence>
<protein>
    <recommendedName>
        <fullName evidence="5">Con-Ins K2</fullName>
    </recommendedName>
    <alternativeName>
        <fullName evidence="5">Insulin K2</fullName>
    </alternativeName>
    <component>
        <recommendedName>
            <fullName evidence="5">Con-Ins K2 B chain</fullName>
        </recommendedName>
    </component>
    <component>
        <recommendedName>
            <fullName evidence="5">Con-Ins K2 A chain</fullName>
        </recommendedName>
    </component>
</protein>
<dbReference type="EMBL" id="MH879034">
    <property type="protein sequence ID" value="AZS18884.1"/>
    <property type="molecule type" value="mRNA"/>
</dbReference>
<dbReference type="GO" id="GO:0005576">
    <property type="term" value="C:extracellular region"/>
    <property type="evidence" value="ECO:0007669"/>
    <property type="project" value="UniProtKB-SubCell"/>
</dbReference>
<dbReference type="GO" id="GO:0005179">
    <property type="term" value="F:hormone activity"/>
    <property type="evidence" value="ECO:0007669"/>
    <property type="project" value="UniProtKB-KW"/>
</dbReference>
<dbReference type="GO" id="GO:0090729">
    <property type="term" value="F:toxin activity"/>
    <property type="evidence" value="ECO:0007669"/>
    <property type="project" value="UniProtKB-KW"/>
</dbReference>
<dbReference type="GO" id="GO:0006006">
    <property type="term" value="P:glucose metabolic process"/>
    <property type="evidence" value="ECO:0007669"/>
    <property type="project" value="UniProtKB-KW"/>
</dbReference>
<dbReference type="Gene3D" id="1.10.100.10">
    <property type="entry name" value="Insulin-like"/>
    <property type="match status" value="1"/>
</dbReference>
<dbReference type="InterPro" id="IPR016179">
    <property type="entry name" value="Insulin-like"/>
</dbReference>
<dbReference type="InterPro" id="IPR036438">
    <property type="entry name" value="Insulin-like_sf"/>
</dbReference>
<dbReference type="InterPro" id="IPR022353">
    <property type="entry name" value="Insulin_CS"/>
</dbReference>
<dbReference type="Pfam" id="PF00049">
    <property type="entry name" value="Insulin"/>
    <property type="match status" value="1"/>
</dbReference>
<dbReference type="SMART" id="SM00078">
    <property type="entry name" value="IlGF"/>
    <property type="match status" value="1"/>
</dbReference>
<dbReference type="SUPFAM" id="SSF56994">
    <property type="entry name" value="Insulin-like"/>
    <property type="match status" value="1"/>
</dbReference>
<dbReference type="PROSITE" id="PS00262">
    <property type="entry name" value="INSULIN"/>
    <property type="match status" value="1"/>
</dbReference>
<name>INS2_CONKI</name>
<organism>
    <name type="scientific">Conus kinoshitai</name>
    <name type="common">Kinoshita's cone</name>
    <dbReference type="NCBI Taxonomy" id="376876"/>
    <lineage>
        <taxon>Eukaryota</taxon>
        <taxon>Metazoa</taxon>
        <taxon>Spiralia</taxon>
        <taxon>Lophotrochozoa</taxon>
        <taxon>Mollusca</taxon>
        <taxon>Gastropoda</taxon>
        <taxon>Caenogastropoda</taxon>
        <taxon>Neogastropoda</taxon>
        <taxon>Conoidea</taxon>
        <taxon>Conidae</taxon>
        <taxon>Conus</taxon>
        <taxon>Afonsoconus</taxon>
    </lineage>
</organism>
<proteinExistence type="inferred from homology"/>
<reference key="1">
    <citation type="journal article" date="2019" name="Elife">
        <title>Fish-hunting cone snail venoms are a rich source of minimized ligands of the vertebrate insulin receptor.</title>
        <authorList>
            <person name="Ahorukomeye P."/>
            <person name="Disotuar M.M."/>
            <person name="Gajewiak J."/>
            <person name="Karanth S."/>
            <person name="Watkins M."/>
            <person name="Robinson S.D."/>
            <person name="Florez Salcedo P."/>
            <person name="Smith N.A."/>
            <person name="Smith B.J."/>
            <person name="Schlegel A."/>
            <person name="Forbes B.E."/>
            <person name="Olivera B."/>
            <person name="Hung-Chieh Chou D."/>
            <person name="Safavi-Hemami H."/>
        </authorList>
    </citation>
    <scope>NUCLEOTIDE SEQUENCE [MRNA]</scope>
    <scope>FUNCTION</scope>
    <scope>SYNTHESIS OF 30-56 AND 84-109</scope>
</reference>
<keyword id="KW-0119">Carbohydrate metabolism</keyword>
<keyword id="KW-0165">Cleavage on pair of basic residues</keyword>
<keyword id="KW-1015">Disulfide bond</keyword>
<keyword id="KW-0301">Gamma-carboxyglutamic acid</keyword>
<keyword id="KW-0313">Glucose metabolism</keyword>
<keyword id="KW-0372">Hormone</keyword>
<keyword id="KW-0964">Secreted</keyword>
<keyword id="KW-0732">Signal</keyword>
<keyword id="KW-0800">Toxin</keyword>